<dbReference type="EMBL" id="AL935263">
    <property type="protein sequence ID" value="CCC78099.1"/>
    <property type="molecule type" value="Genomic_DNA"/>
</dbReference>
<dbReference type="RefSeq" id="WP_003640942.1">
    <property type="nucleotide sequence ID" value="NC_004567.2"/>
</dbReference>
<dbReference type="RefSeq" id="YP_004888613.1">
    <property type="nucleotide sequence ID" value="NC_004567.2"/>
</dbReference>
<dbReference type="SMR" id="Q88YX0"/>
<dbReference type="STRING" id="220668.lp_0619"/>
<dbReference type="EnsemblBacteria" id="CCC78099">
    <property type="protein sequence ID" value="CCC78099"/>
    <property type="gene ID" value="lp_0619"/>
</dbReference>
<dbReference type="GeneID" id="89668260"/>
<dbReference type="KEGG" id="lpl:lp_0619"/>
<dbReference type="PATRIC" id="fig|220668.9.peg.519"/>
<dbReference type="eggNOG" id="COG0080">
    <property type="taxonomic scope" value="Bacteria"/>
</dbReference>
<dbReference type="HOGENOM" id="CLU_074237_2_1_9"/>
<dbReference type="OrthoDB" id="9802408at2"/>
<dbReference type="PhylomeDB" id="Q88YX0"/>
<dbReference type="Proteomes" id="UP000000432">
    <property type="component" value="Chromosome"/>
</dbReference>
<dbReference type="GO" id="GO:0022625">
    <property type="term" value="C:cytosolic large ribosomal subunit"/>
    <property type="evidence" value="ECO:0007669"/>
    <property type="project" value="TreeGrafter"/>
</dbReference>
<dbReference type="GO" id="GO:0070180">
    <property type="term" value="F:large ribosomal subunit rRNA binding"/>
    <property type="evidence" value="ECO:0007669"/>
    <property type="project" value="UniProtKB-UniRule"/>
</dbReference>
<dbReference type="GO" id="GO:0003735">
    <property type="term" value="F:structural constituent of ribosome"/>
    <property type="evidence" value="ECO:0007669"/>
    <property type="project" value="InterPro"/>
</dbReference>
<dbReference type="GO" id="GO:0006412">
    <property type="term" value="P:translation"/>
    <property type="evidence" value="ECO:0007669"/>
    <property type="project" value="UniProtKB-UniRule"/>
</dbReference>
<dbReference type="CDD" id="cd00349">
    <property type="entry name" value="Ribosomal_L11"/>
    <property type="match status" value="1"/>
</dbReference>
<dbReference type="FunFam" id="1.10.10.250:FF:000001">
    <property type="entry name" value="50S ribosomal protein L11"/>
    <property type="match status" value="1"/>
</dbReference>
<dbReference type="FunFam" id="3.30.1550.10:FF:000001">
    <property type="entry name" value="50S ribosomal protein L11"/>
    <property type="match status" value="1"/>
</dbReference>
<dbReference type="Gene3D" id="1.10.10.250">
    <property type="entry name" value="Ribosomal protein L11, C-terminal domain"/>
    <property type="match status" value="1"/>
</dbReference>
<dbReference type="Gene3D" id="3.30.1550.10">
    <property type="entry name" value="Ribosomal protein L11/L12, N-terminal domain"/>
    <property type="match status" value="1"/>
</dbReference>
<dbReference type="HAMAP" id="MF_00736">
    <property type="entry name" value="Ribosomal_uL11"/>
    <property type="match status" value="1"/>
</dbReference>
<dbReference type="InterPro" id="IPR000911">
    <property type="entry name" value="Ribosomal_uL11"/>
</dbReference>
<dbReference type="InterPro" id="IPR006519">
    <property type="entry name" value="Ribosomal_uL11_bac-typ"/>
</dbReference>
<dbReference type="InterPro" id="IPR020783">
    <property type="entry name" value="Ribosomal_uL11_C"/>
</dbReference>
<dbReference type="InterPro" id="IPR036769">
    <property type="entry name" value="Ribosomal_uL11_C_sf"/>
</dbReference>
<dbReference type="InterPro" id="IPR020785">
    <property type="entry name" value="Ribosomal_uL11_CS"/>
</dbReference>
<dbReference type="InterPro" id="IPR020784">
    <property type="entry name" value="Ribosomal_uL11_N"/>
</dbReference>
<dbReference type="InterPro" id="IPR036796">
    <property type="entry name" value="Ribosomal_uL11_N_sf"/>
</dbReference>
<dbReference type="NCBIfam" id="TIGR01632">
    <property type="entry name" value="L11_bact"/>
    <property type="match status" value="1"/>
</dbReference>
<dbReference type="PANTHER" id="PTHR11661">
    <property type="entry name" value="60S RIBOSOMAL PROTEIN L12"/>
    <property type="match status" value="1"/>
</dbReference>
<dbReference type="PANTHER" id="PTHR11661:SF1">
    <property type="entry name" value="LARGE RIBOSOMAL SUBUNIT PROTEIN UL11M"/>
    <property type="match status" value="1"/>
</dbReference>
<dbReference type="Pfam" id="PF00298">
    <property type="entry name" value="Ribosomal_L11"/>
    <property type="match status" value="1"/>
</dbReference>
<dbReference type="Pfam" id="PF03946">
    <property type="entry name" value="Ribosomal_L11_N"/>
    <property type="match status" value="1"/>
</dbReference>
<dbReference type="SMART" id="SM00649">
    <property type="entry name" value="RL11"/>
    <property type="match status" value="1"/>
</dbReference>
<dbReference type="SUPFAM" id="SSF54747">
    <property type="entry name" value="Ribosomal L11/L12e N-terminal domain"/>
    <property type="match status" value="1"/>
</dbReference>
<dbReference type="SUPFAM" id="SSF46906">
    <property type="entry name" value="Ribosomal protein L11, C-terminal domain"/>
    <property type="match status" value="1"/>
</dbReference>
<dbReference type="PROSITE" id="PS00359">
    <property type="entry name" value="RIBOSOMAL_L11"/>
    <property type="match status" value="1"/>
</dbReference>
<name>RL11_LACPL</name>
<comment type="function">
    <text evidence="1">Forms part of the ribosomal stalk which helps the ribosome interact with GTP-bound translation factors.</text>
</comment>
<comment type="subunit">
    <text evidence="1">Part of the ribosomal stalk of the 50S ribosomal subunit. Interacts with L10 and the large rRNA to form the base of the stalk. L10 forms an elongated spine to which L12 dimers bind in a sequential fashion forming a multimeric L10(L12)X complex.</text>
</comment>
<comment type="PTM">
    <text evidence="1">One or more lysine residues are methylated.</text>
</comment>
<comment type="similarity">
    <text evidence="1">Belongs to the universal ribosomal protein uL11 family.</text>
</comment>
<keyword id="KW-0488">Methylation</keyword>
<keyword id="KW-1185">Reference proteome</keyword>
<keyword id="KW-0687">Ribonucleoprotein</keyword>
<keyword id="KW-0689">Ribosomal protein</keyword>
<keyword id="KW-0694">RNA-binding</keyword>
<keyword id="KW-0699">rRNA-binding</keyword>
<feature type="chain" id="PRO_0000104301" description="Large ribosomal subunit protein uL11">
    <location>
        <begin position="1"/>
        <end position="141"/>
    </location>
</feature>
<proteinExistence type="inferred from homology"/>
<evidence type="ECO:0000255" key="1">
    <source>
        <dbReference type="HAMAP-Rule" id="MF_00736"/>
    </source>
</evidence>
<evidence type="ECO:0000305" key="2"/>
<reference key="1">
    <citation type="journal article" date="2003" name="Proc. Natl. Acad. Sci. U.S.A.">
        <title>Complete genome sequence of Lactobacillus plantarum WCFS1.</title>
        <authorList>
            <person name="Kleerebezem M."/>
            <person name="Boekhorst J."/>
            <person name="van Kranenburg R."/>
            <person name="Molenaar D."/>
            <person name="Kuipers O.P."/>
            <person name="Leer R."/>
            <person name="Tarchini R."/>
            <person name="Peters S.A."/>
            <person name="Sandbrink H.M."/>
            <person name="Fiers M.W.E.J."/>
            <person name="Stiekema W."/>
            <person name="Klein Lankhorst R.M."/>
            <person name="Bron P.A."/>
            <person name="Hoffer S.M."/>
            <person name="Nierop Groot M.N."/>
            <person name="Kerkhoven R."/>
            <person name="De Vries M."/>
            <person name="Ursing B."/>
            <person name="De Vos W.M."/>
            <person name="Siezen R.J."/>
        </authorList>
    </citation>
    <scope>NUCLEOTIDE SEQUENCE [LARGE SCALE GENOMIC DNA]</scope>
    <source>
        <strain>ATCC BAA-793 / NCIMB 8826 / WCFS1</strain>
    </source>
</reference>
<reference key="2">
    <citation type="journal article" date="2012" name="J. Bacteriol.">
        <title>Complete resequencing and reannotation of the Lactobacillus plantarum WCFS1 genome.</title>
        <authorList>
            <person name="Siezen R.J."/>
            <person name="Francke C."/>
            <person name="Renckens B."/>
            <person name="Boekhorst J."/>
            <person name="Wels M."/>
            <person name="Kleerebezem M."/>
            <person name="van Hijum S.A."/>
        </authorList>
    </citation>
    <scope>NUCLEOTIDE SEQUENCE [LARGE SCALE GENOMIC DNA]</scope>
    <scope>GENOME REANNOTATION</scope>
    <source>
        <strain>ATCC BAA-793 / NCIMB 8826 / WCFS1</strain>
    </source>
</reference>
<organism>
    <name type="scientific">Lactiplantibacillus plantarum (strain ATCC BAA-793 / NCIMB 8826 / WCFS1)</name>
    <name type="common">Lactobacillus plantarum</name>
    <dbReference type="NCBI Taxonomy" id="220668"/>
    <lineage>
        <taxon>Bacteria</taxon>
        <taxon>Bacillati</taxon>
        <taxon>Bacillota</taxon>
        <taxon>Bacilli</taxon>
        <taxon>Lactobacillales</taxon>
        <taxon>Lactobacillaceae</taxon>
        <taxon>Lactiplantibacillus</taxon>
    </lineage>
</organism>
<sequence length="141" mass="14760">MAKKVANVVKLQIPAGKATPAPPVGPALGQAGINIMGFTKDFNARTADQAGMIIPVVITVYEDRSFDFITKTPPAAVLLKKAAGVESGSGEPNTKKVATVTKDQVKQIAETKMQDLNAADVEAAMRMIEGTARSMGFTVEG</sequence>
<protein>
    <recommendedName>
        <fullName evidence="1">Large ribosomal subunit protein uL11</fullName>
    </recommendedName>
    <alternativeName>
        <fullName evidence="2">50S ribosomal protein L11</fullName>
    </alternativeName>
</protein>
<gene>
    <name evidence="1" type="primary">rplK</name>
    <name type="ordered locus">lp_0619</name>
</gene>
<accession>Q88YX0</accession>
<accession>F9UL84</accession>